<name>MOB1_YEAST</name>
<evidence type="ECO:0000256" key="1">
    <source>
        <dbReference type="SAM" id="MobiDB-lite"/>
    </source>
</evidence>
<evidence type="ECO:0000269" key="2">
    <source>
    </source>
</evidence>
<evidence type="ECO:0000269" key="3">
    <source>
    </source>
</evidence>
<evidence type="ECO:0000269" key="4">
    <source>
    </source>
</evidence>
<evidence type="ECO:0000269" key="5">
    <source>
    </source>
</evidence>
<evidence type="ECO:0000269" key="6">
    <source>
    </source>
</evidence>
<evidence type="ECO:0000269" key="7">
    <source>
    </source>
</evidence>
<evidence type="ECO:0000305" key="8"/>
<evidence type="ECO:0007744" key="9">
    <source>
    </source>
</evidence>
<evidence type="ECO:0007744" key="10">
    <source>
    </source>
</evidence>
<evidence type="ECO:0007829" key="11">
    <source>
        <dbReference type="PDB" id="2HJN"/>
    </source>
</evidence>
<proteinExistence type="evidence at protein level"/>
<sequence>MSFLQNFHISPGQTIRSTRGFKWNTANAANNAGSVSPTKATPHNNTINGNNNNANTINNRADFTNNPVNGYNESDHGRMSPVLTTPKRHAPPPEQLQNVTDFNYTPSHQKPFLQPQAGTTVTTHQDIKQIVEMTLGSEGVLNQAVKLPRGEDENEWLAVHCVDFYNQINMLYGSITEFCSPQTCPRMIATNEYEYLWAFQKGQPPVSVSAPKYVECLMRWCQDQFDDESLFPSKVTGTFPEGFIQRVIQPILRRLFRVYAHIYCHHFNEILELNLQTVLNTSFRHFCLFAQEFELLRPADFGPLLELVMELRDR</sequence>
<accession>P40484</accession>
<accession>D6VVI1</accession>
<protein>
    <recommendedName>
        <fullName>DBF2 kinase activator protein MOB1</fullName>
    </recommendedName>
    <alternativeName>
        <fullName>MPS1 binder 1</fullName>
    </alternativeName>
    <alternativeName>
        <fullName>Maintenance of ploidy protein MOB1</fullName>
    </alternativeName>
</protein>
<reference key="1">
    <citation type="journal article" date="1997" name="Nature">
        <title>The nucleotide sequence of Saccharomyces cerevisiae chromosome IX.</title>
        <authorList>
            <person name="Churcher C.M."/>
            <person name="Bowman S."/>
            <person name="Badcock K."/>
            <person name="Bankier A.T."/>
            <person name="Brown D."/>
            <person name="Chillingworth T."/>
            <person name="Connor R."/>
            <person name="Devlin K."/>
            <person name="Gentles S."/>
            <person name="Hamlin N."/>
            <person name="Harris D.E."/>
            <person name="Horsnell T."/>
            <person name="Hunt S."/>
            <person name="Jagels K."/>
            <person name="Jones M."/>
            <person name="Lye G."/>
            <person name="Moule S."/>
            <person name="Odell C."/>
            <person name="Pearson D."/>
            <person name="Rajandream M.A."/>
            <person name="Rice P."/>
            <person name="Rowley N."/>
            <person name="Skelton J."/>
            <person name="Smith V."/>
            <person name="Walsh S.V."/>
            <person name="Whitehead S."/>
            <person name="Barrell B.G."/>
        </authorList>
    </citation>
    <scope>NUCLEOTIDE SEQUENCE [LARGE SCALE GENOMIC DNA]</scope>
    <source>
        <strain>ATCC 204508 / S288c</strain>
    </source>
</reference>
<reference key="2">
    <citation type="journal article" date="2014" name="G3 (Bethesda)">
        <title>The reference genome sequence of Saccharomyces cerevisiae: Then and now.</title>
        <authorList>
            <person name="Engel S.R."/>
            <person name="Dietrich F.S."/>
            <person name="Fisk D.G."/>
            <person name="Binkley G."/>
            <person name="Balakrishnan R."/>
            <person name="Costanzo M.C."/>
            <person name="Dwight S.S."/>
            <person name="Hitz B.C."/>
            <person name="Karra K."/>
            <person name="Nash R.S."/>
            <person name="Weng S."/>
            <person name="Wong E.D."/>
            <person name="Lloyd P."/>
            <person name="Skrzypek M.S."/>
            <person name="Miyasato S.R."/>
            <person name="Simison M."/>
            <person name="Cherry J.M."/>
        </authorList>
    </citation>
    <scope>GENOME REANNOTATION</scope>
    <source>
        <strain>ATCC 204508 / S288c</strain>
    </source>
</reference>
<reference key="3">
    <citation type="journal article" date="1998" name="Mol. Biol. Cell">
        <title>MOB1, an essential yeast gene required for completion of mitosis and maintenance of ploidy.</title>
        <authorList>
            <person name="Luca F.C."/>
            <person name="Winey M."/>
        </authorList>
    </citation>
    <scope>IDENTIFICATION OF INTRON</scope>
</reference>
<reference key="4">
    <citation type="journal article" date="1998" name="Mol. Cell. Biol.">
        <title>DBF2 protein kinase binds to and acts through the cell cycle-regulated MOB1 protein.</title>
        <authorList>
            <person name="Komarnitsky S.I."/>
            <person name="Chiang Y.-C."/>
            <person name="Luca F.C."/>
            <person name="Chen J."/>
            <person name="Toyn J.H."/>
            <person name="Winey M."/>
            <person name="Johnston L.H."/>
            <person name="Denis C.L."/>
        </authorList>
    </citation>
    <scope>INTERACTION WITH DBF2</scope>
</reference>
<reference key="5">
    <citation type="journal article" date="2001" name="Genes Genet. Syst.">
        <title>Regulation of the localization of Dbf2 and Mob1 during cell division of Saccharomyces cerevisiae.</title>
        <authorList>
            <person name="Yoshida S."/>
            <person name="Toh-e A."/>
        </authorList>
    </citation>
    <scope>SUBCELLULAR LOCATION</scope>
</reference>
<reference key="6">
    <citation type="journal article" date="2001" name="Mol. Cell. Biol.">
        <title>Saccharomyces cerevisiae Mob1p is required for cytokinesis and mitotic exit.</title>
        <authorList>
            <person name="Luca F.C."/>
            <person name="Mody M."/>
            <person name="Kurischko C."/>
            <person name="Roof D.M."/>
            <person name="Giddings T.H."/>
            <person name="Winey M."/>
        </authorList>
    </citation>
    <scope>FUNCTION</scope>
    <scope>SUBCELLULAR LOCATION</scope>
</reference>
<reference key="7">
    <citation type="journal article" date="2001" name="Proc. Natl. Acad. Sci. U.S.A.">
        <title>Protein kinase Cdc15 activates the Dbf2-Mob1 kinase complex.</title>
        <authorList>
            <person name="Mah A.S."/>
            <person name="Jang J."/>
            <person name="Deshaies R.J."/>
        </authorList>
    </citation>
    <scope>FUNCTION</scope>
    <scope>INTERACTION WITH DBF2</scope>
    <scope>PHOSPHORYLATION BY CDC15</scope>
</reference>
<reference key="8">
    <citation type="journal article" date="2003" name="Nature">
        <title>Global analysis of protein localization in budding yeast.</title>
        <authorList>
            <person name="Huh W.-K."/>
            <person name="Falvo J.V."/>
            <person name="Gerke L.C."/>
            <person name="Carroll A.S."/>
            <person name="Howson R.W."/>
            <person name="Weissman J.S."/>
            <person name="O'Shea E.K."/>
        </authorList>
    </citation>
    <scope>SUBCELLULAR LOCATION [LARGE SCALE ANALYSIS]</scope>
</reference>
<reference key="9">
    <citation type="journal article" date="2003" name="Nature">
        <title>Global analysis of protein expression in yeast.</title>
        <authorList>
            <person name="Ghaemmaghami S."/>
            <person name="Huh W.-K."/>
            <person name="Bower K."/>
            <person name="Howson R.W."/>
            <person name="Belle A."/>
            <person name="Dephoure N."/>
            <person name="O'Shea E.K."/>
            <person name="Weissman J.S."/>
        </authorList>
    </citation>
    <scope>LEVEL OF PROTEIN EXPRESSION [LARGE SCALE ANALYSIS]</scope>
</reference>
<reference key="10">
    <citation type="journal article" date="2005" name="Mol. Biol. Cell">
        <title>The mitotic exit network Mob1p-Dbf2p kinase complex localizes to the nucleus and regulates passenger protein localization.</title>
        <authorList>
            <person name="Stoepel J."/>
            <person name="Ottey M.A."/>
            <person name="Kurischko C."/>
            <person name="Hieter P."/>
            <person name="Luca F.C."/>
        </authorList>
    </citation>
    <scope>FUNCTION</scope>
    <scope>SUBCELLULAR LOCATION</scope>
</reference>
<reference key="11">
    <citation type="journal article" date="2007" name="J. Proteome Res.">
        <title>Large-scale phosphorylation analysis of alpha-factor-arrested Saccharomyces cerevisiae.</title>
        <authorList>
            <person name="Li X."/>
            <person name="Gerber S.A."/>
            <person name="Rudner A.D."/>
            <person name="Beausoleil S.A."/>
            <person name="Haas W."/>
            <person name="Villen J."/>
            <person name="Elias J.E."/>
            <person name="Gygi S.P."/>
        </authorList>
    </citation>
    <scope>IDENTIFICATION BY MASS SPECTROMETRY [LARGE SCALE ANALYSIS]</scope>
    <source>
        <strain>ADR376</strain>
    </source>
</reference>
<reference key="12">
    <citation type="journal article" date="2008" name="Mol. Cell. Proteomics">
        <title>A multidimensional chromatography technology for in-depth phosphoproteome analysis.</title>
        <authorList>
            <person name="Albuquerque C.P."/>
            <person name="Smolka M.B."/>
            <person name="Payne S.H."/>
            <person name="Bafna V."/>
            <person name="Eng J."/>
            <person name="Zhou H."/>
        </authorList>
    </citation>
    <scope>PHOSPHORYLATION [LARGE SCALE ANALYSIS] AT SER-34; SER-36 AND SER-80</scope>
    <scope>IDENTIFICATION BY MASS SPECTROMETRY [LARGE SCALE ANALYSIS]</scope>
</reference>
<reference key="13">
    <citation type="journal article" date="2009" name="Science">
        <title>Global analysis of Cdk1 substrate phosphorylation sites provides insights into evolution.</title>
        <authorList>
            <person name="Holt L.J."/>
            <person name="Tuch B.B."/>
            <person name="Villen J."/>
            <person name="Johnson A.D."/>
            <person name="Gygi S.P."/>
            <person name="Morgan D.O."/>
        </authorList>
    </citation>
    <scope>PHOSPHORYLATION [LARGE SCALE ANALYSIS] AT SER-34; SER-36; SER-80 AND SER-229</scope>
    <scope>IDENTIFICATION BY MASS SPECTROMETRY [LARGE SCALE ANALYSIS]</scope>
</reference>
<reference key="14">
    <citation type="journal article" date="2006" name="J. Mol. Biol.">
        <title>Structural and functional analysis of Saccharomyces cerevisiae Mob1.</title>
        <authorList>
            <person name="Mrkobrada S."/>
            <person name="Boucher L."/>
            <person name="Ceccarelli D.F.J."/>
            <person name="Tyers M."/>
            <person name="Sicheri F."/>
        </authorList>
    </citation>
    <scope>X-RAY CRYSTALLOGRAPHY (2.0 ANGSTROMS) OF 79-314</scope>
    <scope>MUTAGENESIS OF THR-105 AND SER-107</scope>
    <scope>INTERACTION WITH MOB2</scope>
</reference>
<dbReference type="EMBL" id="Z38125">
    <property type="protein sequence ID" value="CAA86274.1"/>
    <property type="molecule type" value="Genomic_DNA"/>
</dbReference>
<dbReference type="EMBL" id="BK006942">
    <property type="protein sequence ID" value="DAA08447.1"/>
    <property type="molecule type" value="Genomic_DNA"/>
</dbReference>
<dbReference type="PIR" id="S48466">
    <property type="entry name" value="S48466"/>
</dbReference>
<dbReference type="RefSeq" id="NP_012160.2">
    <property type="nucleotide sequence ID" value="NM_001179454.1"/>
</dbReference>
<dbReference type="PDB" id="2HJN">
    <property type="method" value="X-ray"/>
    <property type="resolution" value="2.00 A"/>
    <property type="chains" value="A=79-314"/>
</dbReference>
<dbReference type="PDB" id="5NCN">
    <property type="method" value="X-ray"/>
    <property type="resolution" value="3.50 A"/>
    <property type="chains" value="A=79-314"/>
</dbReference>
<dbReference type="PDBsum" id="2HJN"/>
<dbReference type="PDBsum" id="5NCN"/>
<dbReference type="SMR" id="P40484"/>
<dbReference type="BioGRID" id="34885">
    <property type="interactions" value="354"/>
</dbReference>
<dbReference type="ComplexPortal" id="CPX-1683">
    <property type="entry name" value="DBF2-MOB1 kinase complex"/>
</dbReference>
<dbReference type="ComplexPortal" id="CPX-5341">
    <property type="entry name" value="DBF20-MOB1 kinase complex"/>
</dbReference>
<dbReference type="DIP" id="DIP-2320N"/>
<dbReference type="FunCoup" id="P40484">
    <property type="interactions" value="668"/>
</dbReference>
<dbReference type="IntAct" id="P40484">
    <property type="interactions" value="29"/>
</dbReference>
<dbReference type="MINT" id="P40484"/>
<dbReference type="STRING" id="4932.YIL106W"/>
<dbReference type="iPTMnet" id="P40484"/>
<dbReference type="PaxDb" id="4932-YIL106W"/>
<dbReference type="PeptideAtlas" id="P40484"/>
<dbReference type="EnsemblFungi" id="YIL106W_mRNA">
    <property type="protein sequence ID" value="YIL106W"/>
    <property type="gene ID" value="YIL106W"/>
</dbReference>
<dbReference type="GeneID" id="854700"/>
<dbReference type="KEGG" id="sce:YIL106W"/>
<dbReference type="AGR" id="SGD:S000001368"/>
<dbReference type="SGD" id="S000001368">
    <property type="gene designation" value="MOB1"/>
</dbReference>
<dbReference type="VEuPathDB" id="FungiDB:YIL106W"/>
<dbReference type="eggNOG" id="KOG0440">
    <property type="taxonomic scope" value="Eukaryota"/>
</dbReference>
<dbReference type="GeneTree" id="ENSGT01120000271863"/>
<dbReference type="HOGENOM" id="CLU_038321_4_2_1"/>
<dbReference type="InParanoid" id="P40484"/>
<dbReference type="OMA" id="PQSCPRM"/>
<dbReference type="OrthoDB" id="8170117at2759"/>
<dbReference type="BioCyc" id="YEAST:G3O-31362-MONOMER"/>
<dbReference type="BioGRID-ORCS" id="854700">
    <property type="hits" value="8 hits in 10 CRISPR screens"/>
</dbReference>
<dbReference type="CD-CODE" id="876000F7">
    <property type="entry name" value="Centrosome"/>
</dbReference>
<dbReference type="EvolutionaryTrace" id="P40484"/>
<dbReference type="PRO" id="PR:P40484"/>
<dbReference type="Proteomes" id="UP000002311">
    <property type="component" value="Chromosome IX"/>
</dbReference>
<dbReference type="RNAct" id="P40484">
    <property type="molecule type" value="protein"/>
</dbReference>
<dbReference type="GO" id="GO:0005935">
    <property type="term" value="C:cellular bud neck"/>
    <property type="evidence" value="ECO:0000314"/>
    <property type="project" value="SGD"/>
</dbReference>
<dbReference type="GO" id="GO:0000775">
    <property type="term" value="C:chromosome, centromeric region"/>
    <property type="evidence" value="ECO:0007669"/>
    <property type="project" value="UniProtKB-SubCell"/>
</dbReference>
<dbReference type="GO" id="GO:0005737">
    <property type="term" value="C:cytoplasm"/>
    <property type="evidence" value="ECO:0007005"/>
    <property type="project" value="SGD"/>
</dbReference>
<dbReference type="GO" id="GO:0044732">
    <property type="term" value="C:mitotic spindle pole body"/>
    <property type="evidence" value="ECO:0000314"/>
    <property type="project" value="SGD"/>
</dbReference>
<dbReference type="GO" id="GO:0034399">
    <property type="term" value="C:nuclear periphery"/>
    <property type="evidence" value="ECO:0007005"/>
    <property type="project" value="SGD"/>
</dbReference>
<dbReference type="GO" id="GO:0005634">
    <property type="term" value="C:nucleus"/>
    <property type="evidence" value="ECO:0000318"/>
    <property type="project" value="GO_Central"/>
</dbReference>
<dbReference type="GO" id="GO:1902554">
    <property type="term" value="C:serine/threonine protein kinase complex"/>
    <property type="evidence" value="ECO:0000353"/>
    <property type="project" value="ComplexPortal"/>
</dbReference>
<dbReference type="GO" id="GO:0034973">
    <property type="term" value="C:Sid2-Mob1 complex"/>
    <property type="evidence" value="ECO:0000314"/>
    <property type="project" value="ComplexPortal"/>
</dbReference>
<dbReference type="GO" id="GO:0005816">
    <property type="term" value="C:spindle pole body"/>
    <property type="evidence" value="ECO:0000314"/>
    <property type="project" value="SGD"/>
</dbReference>
<dbReference type="GO" id="GO:0019207">
    <property type="term" value="F:kinase regulator activity"/>
    <property type="evidence" value="ECO:0000314"/>
    <property type="project" value="SGD"/>
</dbReference>
<dbReference type="GO" id="GO:0046872">
    <property type="term" value="F:metal ion binding"/>
    <property type="evidence" value="ECO:0007669"/>
    <property type="project" value="UniProtKB-KW"/>
</dbReference>
<dbReference type="GO" id="GO:0030295">
    <property type="term" value="F:protein kinase activator activity"/>
    <property type="evidence" value="ECO:0000318"/>
    <property type="project" value="GO_Central"/>
</dbReference>
<dbReference type="GO" id="GO:0051301">
    <property type="term" value="P:cell division"/>
    <property type="evidence" value="ECO:0000318"/>
    <property type="project" value="GO_Central"/>
</dbReference>
<dbReference type="GO" id="GO:0010458">
    <property type="term" value="P:exit from mitosis"/>
    <property type="evidence" value="ECO:0000303"/>
    <property type="project" value="ComplexPortal"/>
</dbReference>
<dbReference type="GO" id="GO:0000281">
    <property type="term" value="P:mitotic cytokinesis"/>
    <property type="evidence" value="ECO:0000315"/>
    <property type="project" value="SGD"/>
</dbReference>
<dbReference type="GO" id="GO:0032465">
    <property type="term" value="P:regulation of cytokinesis"/>
    <property type="evidence" value="ECO:0000314"/>
    <property type="project" value="ComplexPortal"/>
</dbReference>
<dbReference type="GO" id="GO:0007096">
    <property type="term" value="P:regulation of exit from mitosis"/>
    <property type="evidence" value="ECO:0000315"/>
    <property type="project" value="SGD"/>
</dbReference>
<dbReference type="GO" id="GO:0007165">
    <property type="term" value="P:signal transduction"/>
    <property type="evidence" value="ECO:0000318"/>
    <property type="project" value="GO_Central"/>
</dbReference>
<dbReference type="FunFam" id="1.20.140.30:FF:000006">
    <property type="entry name" value="Mob1p"/>
    <property type="match status" value="1"/>
</dbReference>
<dbReference type="Gene3D" id="1.20.140.30">
    <property type="entry name" value="MOB kinase activator"/>
    <property type="match status" value="1"/>
</dbReference>
<dbReference type="InterPro" id="IPR005301">
    <property type="entry name" value="MOB_kinase_act_fam"/>
</dbReference>
<dbReference type="InterPro" id="IPR036703">
    <property type="entry name" value="MOB_kinase_act_sf"/>
</dbReference>
<dbReference type="PANTHER" id="PTHR22599">
    <property type="entry name" value="MPS ONE BINDER KINASE ACTIVATOR-LIKE MOB"/>
    <property type="match status" value="1"/>
</dbReference>
<dbReference type="Pfam" id="PF03637">
    <property type="entry name" value="Mob1_phocein"/>
    <property type="match status" value="1"/>
</dbReference>
<dbReference type="SMART" id="SM01388">
    <property type="entry name" value="Mob1_phocein"/>
    <property type="match status" value="1"/>
</dbReference>
<dbReference type="SUPFAM" id="SSF101152">
    <property type="entry name" value="Mob1/phocein"/>
    <property type="match status" value="1"/>
</dbReference>
<keyword id="KW-0002">3D-structure</keyword>
<keyword id="KW-0131">Cell cycle</keyword>
<keyword id="KW-0132">Cell division</keyword>
<keyword id="KW-0137">Centromere</keyword>
<keyword id="KW-0158">Chromosome</keyword>
<keyword id="KW-0963">Cytoplasm</keyword>
<keyword id="KW-0206">Cytoskeleton</keyword>
<keyword id="KW-0479">Metal-binding</keyword>
<keyword id="KW-0539">Nucleus</keyword>
<keyword id="KW-0597">Phosphoprotein</keyword>
<keyword id="KW-1185">Reference proteome</keyword>
<keyword id="KW-0862">Zinc</keyword>
<feature type="chain" id="PRO_0000193582" description="DBF2 kinase activator protein MOB1">
    <location>
        <begin position="1"/>
        <end position="314"/>
    </location>
</feature>
<feature type="region of interest" description="Disordered" evidence="1">
    <location>
        <begin position="29"/>
        <end position="55"/>
    </location>
</feature>
<feature type="compositionally biased region" description="Polar residues" evidence="1">
    <location>
        <begin position="29"/>
        <end position="43"/>
    </location>
</feature>
<feature type="compositionally biased region" description="Low complexity" evidence="1">
    <location>
        <begin position="44"/>
        <end position="55"/>
    </location>
</feature>
<feature type="binding site">
    <location>
        <position position="179"/>
    </location>
    <ligand>
        <name>Zn(2+)</name>
        <dbReference type="ChEBI" id="CHEBI:29105"/>
    </ligand>
</feature>
<feature type="binding site">
    <location>
        <position position="184"/>
    </location>
    <ligand>
        <name>Zn(2+)</name>
        <dbReference type="ChEBI" id="CHEBI:29105"/>
    </ligand>
</feature>
<feature type="binding site">
    <location>
        <position position="261"/>
    </location>
    <ligand>
        <name>Zn(2+)</name>
        <dbReference type="ChEBI" id="CHEBI:29105"/>
    </ligand>
</feature>
<feature type="binding site">
    <location>
        <position position="266"/>
    </location>
    <ligand>
        <name>Zn(2+)</name>
        <dbReference type="ChEBI" id="CHEBI:29105"/>
    </ligand>
</feature>
<feature type="modified residue" description="Phosphoserine" evidence="9 10">
    <location>
        <position position="34"/>
    </location>
</feature>
<feature type="modified residue" description="Phosphoserine" evidence="9 10">
    <location>
        <position position="36"/>
    </location>
</feature>
<feature type="modified residue" description="Phosphoserine" evidence="9 10">
    <location>
        <position position="80"/>
    </location>
</feature>
<feature type="modified residue" description="Phosphoserine" evidence="10">
    <location>
        <position position="229"/>
    </location>
</feature>
<feature type="mutagenesis site" description="No effect." evidence="6">
    <original>T</original>
    <variation>A</variation>
    <variation>D</variation>
    <location>
        <position position="105"/>
    </location>
</feature>
<feature type="mutagenesis site" description="No effect." evidence="6">
    <original>S</original>
    <variation>A</variation>
    <variation>D</variation>
    <location>
        <position position="107"/>
    </location>
</feature>
<feature type="strand" evidence="11">
    <location>
        <begin position="82"/>
        <end position="84"/>
    </location>
</feature>
<feature type="helix" evidence="11">
    <location>
        <begin position="127"/>
        <end position="136"/>
    </location>
</feature>
<feature type="helix" evidence="11">
    <location>
        <begin position="137"/>
        <end position="139"/>
    </location>
</feature>
<feature type="helix" evidence="11">
    <location>
        <begin position="153"/>
        <end position="175"/>
    </location>
</feature>
<feature type="helix" evidence="11">
    <location>
        <begin position="176"/>
        <end position="178"/>
    </location>
</feature>
<feature type="turn" evidence="11">
    <location>
        <begin position="181"/>
        <end position="183"/>
    </location>
</feature>
<feature type="strand" evidence="11">
    <location>
        <begin position="188"/>
        <end position="190"/>
    </location>
</feature>
<feature type="strand" evidence="11">
    <location>
        <begin position="193"/>
        <end position="195"/>
    </location>
</feature>
<feature type="helix" evidence="11">
    <location>
        <begin position="210"/>
        <end position="225"/>
    </location>
</feature>
<feature type="turn" evidence="11">
    <location>
        <begin position="228"/>
        <end position="230"/>
    </location>
</feature>
<feature type="helix" evidence="11">
    <location>
        <begin position="243"/>
        <end position="246"/>
    </location>
</feature>
<feature type="helix" evidence="11">
    <location>
        <begin position="248"/>
        <end position="265"/>
    </location>
</feature>
<feature type="helix" evidence="11">
    <location>
        <begin position="267"/>
        <end position="272"/>
    </location>
</feature>
<feature type="helix" evidence="11">
    <location>
        <begin position="276"/>
        <end position="292"/>
    </location>
</feature>
<feature type="helix" evidence="11">
    <location>
        <begin position="298"/>
        <end position="304"/>
    </location>
</feature>
<feature type="helix" evidence="11">
    <location>
        <begin position="305"/>
        <end position="311"/>
    </location>
</feature>
<organism>
    <name type="scientific">Saccharomyces cerevisiae (strain ATCC 204508 / S288c)</name>
    <name type="common">Baker's yeast</name>
    <dbReference type="NCBI Taxonomy" id="559292"/>
    <lineage>
        <taxon>Eukaryota</taxon>
        <taxon>Fungi</taxon>
        <taxon>Dikarya</taxon>
        <taxon>Ascomycota</taxon>
        <taxon>Saccharomycotina</taxon>
        <taxon>Saccharomycetes</taxon>
        <taxon>Saccharomycetales</taxon>
        <taxon>Saccharomycetaceae</taxon>
        <taxon>Saccharomyces</taxon>
    </lineage>
</organism>
<comment type="function">
    <text evidence="2 3 5">Functions as an activator subunit for the DBF2 protein kinase. Binds to DBF2, which is required for the phosphorylation and activation of DBF2 by the upstream kinase CDC15 in late anaphase. DBF2-MOB1 is part of the mitotic exit network (MEN) signaling cascade, which regulates release from the nucleus and activity of phosphatase CDC14. Required for inactivation of mitotic cyclin-dependent kinase for exit from mitosis, cytokinesis and G1 gene transcription.</text>
</comment>
<comment type="subunit">
    <text evidence="2 6 7">Interacts with protein kinase DBF2 to form the MEN DBF2-MOB1 kinase complex.</text>
</comment>
<comment type="interaction">
    <interactant intactId="EBI-11119">
        <id>P40484</id>
    </interactant>
    <interactant intactId="EBI-5569">
        <id>P22204</id>
        <label>DBF2</label>
    </interactant>
    <organismsDiffer>false</organismsDiffer>
    <experiments>16</experiments>
</comment>
<comment type="interaction">
    <interactant intactId="EBI-11119">
        <id>P40484</id>
    </interactant>
    <interactant intactId="EBI-5588">
        <id>P32328</id>
        <label>DBF20</label>
    </interactant>
    <organismsDiffer>false</organismsDiffer>
    <experiments>8</experiments>
</comment>
<comment type="interaction">
    <interactant intactId="EBI-11119">
        <id>P40484</id>
    </interactant>
    <interactant intactId="EBI-13629">
        <id>P39008</id>
        <label>POP2</label>
    </interactant>
    <organismsDiffer>false</organismsDiffer>
    <experiments>2</experiments>
</comment>
<comment type="subcellular location">
    <subcellularLocation>
        <location>Cytoplasm</location>
    </subcellularLocation>
    <subcellularLocation>
        <location>Nucleus</location>
    </subcellularLocation>
    <subcellularLocation>
        <location>Cytoplasm</location>
        <location>Cytoskeleton</location>
        <location>Microtubule organizing center</location>
        <location>Spindle pole body</location>
    </subcellularLocation>
    <subcellularLocation>
        <location>Bud neck</location>
    </subcellularLocation>
    <subcellularLocation>
        <location>Chromosome</location>
        <location>Centromere</location>
    </subcellularLocation>
    <text>Localizes predominantly to the cytoplasmic surface of the spindle pole body during anaphase and to a ring at the bud neck during cytokinesis. Translocates to the nucleus during mitosis and associates with centromere DNA.</text>
</comment>
<comment type="PTM">
    <text evidence="2">Phosphorylated by CDC15.</text>
</comment>
<comment type="miscellaneous">
    <text evidence="4">Present with 5020 molecules/cell in log phase SD medium.</text>
</comment>
<comment type="similarity">
    <text evidence="8">Belongs to the MOB1/phocein family.</text>
</comment>
<gene>
    <name type="primary">MOB1</name>
    <name type="ordered locus">YIL106W</name>
</gene>